<reference key="1">
    <citation type="journal article" date="2010" name="Environ. Microbiol.">
        <title>The genome of Syntrophomonas wolfei: new insights into syntrophic metabolism and biohydrogen production.</title>
        <authorList>
            <person name="Sieber J.R."/>
            <person name="Sims D.R."/>
            <person name="Han C."/>
            <person name="Kim E."/>
            <person name="Lykidis A."/>
            <person name="Lapidus A.L."/>
            <person name="McDonnald E."/>
            <person name="Rohlin L."/>
            <person name="Culley D.E."/>
            <person name="Gunsalus R."/>
            <person name="McInerney M.J."/>
        </authorList>
    </citation>
    <scope>NUCLEOTIDE SEQUENCE [LARGE SCALE GENOMIC DNA]</scope>
    <source>
        <strain>DSM 2245B / Goettingen</strain>
    </source>
</reference>
<evidence type="ECO:0000255" key="1">
    <source>
        <dbReference type="HAMAP-Rule" id="MF_00201"/>
    </source>
</evidence>
<dbReference type="EMBL" id="CP000448">
    <property type="protein sequence ID" value="ABI68861.1"/>
    <property type="molecule type" value="Genomic_DNA"/>
</dbReference>
<dbReference type="RefSeq" id="WP_011640960.1">
    <property type="nucleotide sequence ID" value="NC_008346.1"/>
</dbReference>
<dbReference type="SMR" id="Q0AWP3"/>
<dbReference type="STRING" id="335541.Swol_1558"/>
<dbReference type="KEGG" id="swo:Swol_1558"/>
<dbReference type="eggNOG" id="COG1381">
    <property type="taxonomic scope" value="Bacteria"/>
</dbReference>
<dbReference type="HOGENOM" id="CLU_066632_4_0_9"/>
<dbReference type="OrthoDB" id="9797083at2"/>
<dbReference type="Proteomes" id="UP000001968">
    <property type="component" value="Chromosome"/>
</dbReference>
<dbReference type="GO" id="GO:0043590">
    <property type="term" value="C:bacterial nucleoid"/>
    <property type="evidence" value="ECO:0007669"/>
    <property type="project" value="TreeGrafter"/>
</dbReference>
<dbReference type="GO" id="GO:0006310">
    <property type="term" value="P:DNA recombination"/>
    <property type="evidence" value="ECO:0007669"/>
    <property type="project" value="UniProtKB-UniRule"/>
</dbReference>
<dbReference type="GO" id="GO:0006302">
    <property type="term" value="P:double-strand break repair"/>
    <property type="evidence" value="ECO:0007669"/>
    <property type="project" value="TreeGrafter"/>
</dbReference>
<dbReference type="Gene3D" id="2.40.50.140">
    <property type="entry name" value="Nucleic acid-binding proteins"/>
    <property type="match status" value="1"/>
</dbReference>
<dbReference type="Gene3D" id="1.20.1440.120">
    <property type="entry name" value="Recombination protein O, C-terminal domain"/>
    <property type="match status" value="1"/>
</dbReference>
<dbReference type="HAMAP" id="MF_00201">
    <property type="entry name" value="RecO"/>
    <property type="match status" value="1"/>
</dbReference>
<dbReference type="InterPro" id="IPR037278">
    <property type="entry name" value="ARFGAP/RecO"/>
</dbReference>
<dbReference type="InterPro" id="IPR022572">
    <property type="entry name" value="DNA_rep/recomb_RecO_N"/>
</dbReference>
<dbReference type="InterPro" id="IPR012340">
    <property type="entry name" value="NA-bd_OB-fold"/>
</dbReference>
<dbReference type="InterPro" id="IPR003717">
    <property type="entry name" value="RecO"/>
</dbReference>
<dbReference type="InterPro" id="IPR042242">
    <property type="entry name" value="RecO_C"/>
</dbReference>
<dbReference type="NCBIfam" id="TIGR00613">
    <property type="entry name" value="reco"/>
    <property type="match status" value="1"/>
</dbReference>
<dbReference type="PANTHER" id="PTHR33991">
    <property type="entry name" value="DNA REPAIR PROTEIN RECO"/>
    <property type="match status" value="1"/>
</dbReference>
<dbReference type="PANTHER" id="PTHR33991:SF1">
    <property type="entry name" value="DNA REPAIR PROTEIN RECO"/>
    <property type="match status" value="1"/>
</dbReference>
<dbReference type="Pfam" id="PF02565">
    <property type="entry name" value="RecO_C"/>
    <property type="match status" value="1"/>
</dbReference>
<dbReference type="Pfam" id="PF11967">
    <property type="entry name" value="RecO_N"/>
    <property type="match status" value="1"/>
</dbReference>
<dbReference type="SUPFAM" id="SSF57863">
    <property type="entry name" value="ArfGap/RecO-like zinc finger"/>
    <property type="match status" value="1"/>
</dbReference>
<dbReference type="SUPFAM" id="SSF50249">
    <property type="entry name" value="Nucleic acid-binding proteins"/>
    <property type="match status" value="1"/>
</dbReference>
<protein>
    <recommendedName>
        <fullName evidence="1">DNA repair protein RecO</fullName>
    </recommendedName>
    <alternativeName>
        <fullName evidence="1">Recombination protein O</fullName>
    </alternativeName>
</protein>
<comment type="function">
    <text evidence="1">Involved in DNA repair and RecF pathway recombination.</text>
</comment>
<comment type="similarity">
    <text evidence="1">Belongs to the RecO family.</text>
</comment>
<gene>
    <name evidence="1" type="primary">recO</name>
    <name type="ordered locus">Swol_1558</name>
</gene>
<keyword id="KW-0227">DNA damage</keyword>
<keyword id="KW-0233">DNA recombination</keyword>
<keyword id="KW-0234">DNA repair</keyword>
<keyword id="KW-1185">Reference proteome</keyword>
<organism>
    <name type="scientific">Syntrophomonas wolfei subsp. wolfei (strain DSM 2245B / Goettingen)</name>
    <dbReference type="NCBI Taxonomy" id="335541"/>
    <lineage>
        <taxon>Bacteria</taxon>
        <taxon>Bacillati</taxon>
        <taxon>Bacillota</taxon>
        <taxon>Clostridia</taxon>
        <taxon>Eubacteriales</taxon>
        <taxon>Syntrophomonadaceae</taxon>
        <taxon>Syntrophomonas</taxon>
    </lineage>
</organism>
<feature type="chain" id="PRO_0000264853" description="DNA repair protein RecO">
    <location>
        <begin position="1"/>
        <end position="250"/>
    </location>
</feature>
<name>RECO_SYNWW</name>
<accession>Q0AWP3</accession>
<sequence>MYLRSRAIVIKNMDYRESDKLVTIFCEHEGKMKAVARGIKKPRSSLRACVQPFCHSSLFFSRGKGMNLITQGKLLDFYGNTREDFERSLYALYLMELLDKSLMEGVAIPRLYTSTLEVLSHLNHSGYNPMLIRYFEMNLLVNLGYSPLLDHCVLCGKKDDLKVFSLPDGGMLCRDCSYQASGAVSLSKETLALISLLGRSRLATVERVRVSNKAQKELEYFLEKYLEYYLERKFNLKKAMSILKRSMPRY</sequence>
<proteinExistence type="inferred from homology"/>